<name>YCCT_SALPC</name>
<keyword id="KW-0732">Signal</keyword>
<reference key="1">
    <citation type="journal article" date="2009" name="PLoS ONE">
        <title>Salmonella paratyphi C: genetic divergence from Salmonella choleraesuis and pathogenic convergence with Salmonella typhi.</title>
        <authorList>
            <person name="Liu W.-Q."/>
            <person name="Feng Y."/>
            <person name="Wang Y."/>
            <person name="Zou Q.-H."/>
            <person name="Chen F."/>
            <person name="Guo J.-T."/>
            <person name="Peng Y.-H."/>
            <person name="Jin Y."/>
            <person name="Li Y.-G."/>
            <person name="Hu S.-N."/>
            <person name="Johnston R.N."/>
            <person name="Liu G.-R."/>
            <person name="Liu S.-L."/>
        </authorList>
    </citation>
    <scope>NUCLEOTIDE SEQUENCE [LARGE SCALE GENOMIC DNA]</scope>
    <source>
        <strain>RKS4594</strain>
    </source>
</reference>
<comment type="similarity">
    <text evidence="1">Belongs to the UPF0319 family.</text>
</comment>
<protein>
    <recommendedName>
        <fullName evidence="1">UPF0319 protein YccT</fullName>
    </recommendedName>
</protein>
<accession>C0Q8C8</accession>
<gene>
    <name evidence="1" type="primary">yccT</name>
    <name type="ordered locus">SPC_2672</name>
</gene>
<evidence type="ECO:0000255" key="1">
    <source>
        <dbReference type="HAMAP-Rule" id="MF_00789"/>
    </source>
</evidence>
<organism>
    <name type="scientific">Salmonella paratyphi C (strain RKS4594)</name>
    <dbReference type="NCBI Taxonomy" id="476213"/>
    <lineage>
        <taxon>Bacteria</taxon>
        <taxon>Pseudomonadati</taxon>
        <taxon>Pseudomonadota</taxon>
        <taxon>Gammaproteobacteria</taxon>
        <taxon>Enterobacterales</taxon>
        <taxon>Enterobacteriaceae</taxon>
        <taxon>Salmonella</taxon>
    </lineage>
</organism>
<dbReference type="EMBL" id="CP000857">
    <property type="protein sequence ID" value="ACN46773.1"/>
    <property type="molecule type" value="Genomic_DNA"/>
</dbReference>
<dbReference type="RefSeq" id="WP_000847732.1">
    <property type="nucleotide sequence ID" value="NC_012125.1"/>
</dbReference>
<dbReference type="KEGG" id="sei:SPC_2672"/>
<dbReference type="HOGENOM" id="CLU_073782_2_0_6"/>
<dbReference type="Proteomes" id="UP000001599">
    <property type="component" value="Chromosome"/>
</dbReference>
<dbReference type="HAMAP" id="MF_00789">
    <property type="entry name" value="UPF0319"/>
    <property type="match status" value="1"/>
</dbReference>
<dbReference type="InterPro" id="IPR018635">
    <property type="entry name" value="UPF0319"/>
</dbReference>
<dbReference type="NCBIfam" id="NF047712">
    <property type="entry name" value="CrliSynInhib"/>
    <property type="match status" value="1"/>
</dbReference>
<dbReference type="NCBIfam" id="NF002967">
    <property type="entry name" value="PRK03641.1"/>
    <property type="match status" value="1"/>
</dbReference>
<dbReference type="PANTHER" id="PTHR38108">
    <property type="entry name" value="UPF0319 PROTEIN YCCT"/>
    <property type="match status" value="1"/>
</dbReference>
<dbReference type="PANTHER" id="PTHR38108:SF1">
    <property type="entry name" value="UPF0319 PROTEIN YCCT"/>
    <property type="match status" value="1"/>
</dbReference>
<dbReference type="Pfam" id="PF09829">
    <property type="entry name" value="DUF2057"/>
    <property type="match status" value="1"/>
</dbReference>
<proteinExistence type="inferred from homology"/>
<feature type="signal peptide" evidence="1">
    <location>
        <begin position="1"/>
        <end position="20"/>
    </location>
</feature>
<feature type="chain" id="PRO_1000148490" description="UPF0319 protein YccT">
    <location>
        <begin position="21"/>
        <end position="220"/>
    </location>
</feature>
<sequence>MKTGALTTFLALCLPVTVFATTLRLSNEVDLLVLDGKKVSSSLLRGAESIELENGPHQLVFRVEKTIRLPGNEERLYISPPLVISFDTQLISQVNFQLPRLENEREASHFNAAPRLALLDGDAMPIPVKLDILAITSTAKVVDYEIETERYNKSAKRASLPQFATMMADDSTLLSDVSELDTVPPQSQTLTEQRLKYWFRLADPQTRHHFLQWAEKQPPS</sequence>